<gene>
    <name type="primary">PTPRS</name>
</gene>
<comment type="function">
    <text evidence="2 3 16 18 19">Cell surface receptor that binds to glycosaminoglycans, including chondroitin sulfate proteoglycans and heparan sulfate proteoglycan (PubMed:21454754). Binding to chondroitin sulfate and heparan sulfate proteoglycans has opposite effects on PTPRS oligomerization and regulation of neurite outgrowth. Contributes to the inhibition of neurite and axonal outgrowth by chondroitin sulfate proteoglycans, also after nerve transection. Plays a role in stimulating neurite outgrowth in response to the heparan sulfate proteoglycan GPC2. Required for normal brain development, especially for normal development of the pituitary gland and the olfactory bulb. Functions as a tyrosine phosphatase (PubMed:8524829). Mediates dephosphorylation of NTRK1, NTRK2 and NTRK3 (By similarity). Plays a role in down-regulation of signaling cascades that lead to the activation of Akt and MAP kinases (By similarity). Down-regulates TLR9-mediated activation of NF-kappa-B, as well as production of TNF, interferon alpha and interferon beta (PubMed:26231120).</text>
</comment>
<comment type="catalytic activity">
    <reaction evidence="9 19 27">
        <text>O-phospho-L-tyrosyl-[protein] + H2O = L-tyrosyl-[protein] + phosphate</text>
        <dbReference type="Rhea" id="RHEA:10684"/>
        <dbReference type="Rhea" id="RHEA-COMP:10136"/>
        <dbReference type="Rhea" id="RHEA-COMP:20101"/>
        <dbReference type="ChEBI" id="CHEBI:15377"/>
        <dbReference type="ChEBI" id="CHEBI:43474"/>
        <dbReference type="ChEBI" id="CHEBI:46858"/>
        <dbReference type="ChEBI" id="CHEBI:61978"/>
        <dbReference type="EC" id="3.1.3.48"/>
    </reaction>
</comment>
<comment type="subunit">
    <text evidence="2 4 19 21">Binding to large heparan sulfate proteoglycan structures promotes oligomerization. Binding to chondroitin sulfate proteoglycan does not lead to oligomerization (By similarity). Interacts (via Ig-like domains) with NTRK3 (PubMed:25385546). Interacts (via Ig-like domains) with NTRK1, but does not form detectable complexes with NTRK2 (By similarity). Interacts with PPFIA1, PPFIA2 and PPFIA3 (PubMed:8524829, PubMed:9624153).</text>
</comment>
<comment type="interaction">
    <interactant intactId="EBI-711536">
        <id>Q13332</id>
    </interactant>
    <interactant intactId="EBI-728153">
        <id>Q16849</id>
        <label>PTPRN</label>
    </interactant>
    <organismsDiffer>false</organismsDiffer>
    <experiments>5</experiments>
</comment>
<comment type="interaction">
    <interactant intactId="EBI-25906956">
        <id>Q13332-6</id>
    </interactant>
    <interactant intactId="EBI-1054873">
        <id>Q9Y5Q9</id>
        <label>GTF3C3</label>
    </interactant>
    <organismsDiffer>false</organismsDiffer>
    <experiments>3</experiments>
</comment>
<comment type="subcellular location">
    <subcellularLocation>
        <location evidence="18">Cell membrane</location>
        <topology evidence="25">Single-pass type I membrane protein</topology>
    </subcellularLocation>
    <subcellularLocation>
        <location evidence="2">Cell projection</location>
        <location evidence="2">Axon</location>
    </subcellularLocation>
    <subcellularLocation>
        <location evidence="2">Perikaryon</location>
    </subcellularLocation>
    <subcellularLocation>
        <location evidence="4">Cytoplasmic vesicle</location>
        <location evidence="4">Secretory vesicle</location>
        <location evidence="4">Synaptic vesicle membrane</location>
    </subcellularLocation>
    <subcellularLocation>
        <location evidence="4">Synapse</location>
        <location evidence="4">Synaptosome</location>
    </subcellularLocation>
    <subcellularLocation>
        <location evidence="4">Postsynaptic density</location>
    </subcellularLocation>
    <subcellularLocation>
        <location evidence="2">Cell projection</location>
        <location evidence="2">Neuron projection</location>
    </subcellularLocation>
    <subcellularLocation>
        <location evidence="2">Cell projection</location>
        <location evidence="2">Growth cone</location>
    </subcellularLocation>
    <text evidence="2 18">Is rapidly internalized when dendritic cells are stimulated with the TLR9 ligand cytidine-phosphate-guanosine (CpG) (PubMed:26231120). Detected in a punctate pattern along neurites and axon growth cones (By similarity).</text>
</comment>
<comment type="alternative products">
    <event type="alternative splicing"/>
    <isoform>
        <id>Q13332-1</id>
        <name>1</name>
        <name>PTPS</name>
        <sequence type="displayed"/>
    </isoform>
    <isoform>
        <id>Q13332-2</id>
        <name>PTPS-MEA</name>
        <sequence type="described" ref="VSP_050021"/>
    </isoform>
    <isoform>
        <id>Q13332-3</id>
        <name>PTPS-MEB</name>
        <sequence type="described" ref="VSP_050022 VSP_050026 VSP_050027"/>
    </isoform>
    <isoform>
        <id>Q13332-4</id>
        <name>PTPS-MEC</name>
        <sequence type="described" ref="VSP_050024"/>
    </isoform>
    <isoform>
        <id>Q13332-5</id>
        <name>PTPS-F4-7</name>
        <sequence type="described" ref="VSP_050023 VSP_050025"/>
    </isoform>
    <isoform>
        <id>Q13332-6</id>
        <name>2</name>
        <sequence type="described" ref="VSP_050021 VSP_050022 VSP_050024 VSP_050026 VSP_050027"/>
    </isoform>
    <isoform>
        <id>Q13332-7</id>
        <name>3</name>
        <sequence type="described" ref="VSP_050021 VSP_050022 VSP_050023 VSP_050025 VSP_050026 VSP_050027"/>
    </isoform>
    <text>Additional isoforms seem to exist.</text>
</comment>
<comment type="tissue specificity">
    <text evidence="18 19 20">Detected in peripheral blood plasmacytoid dendritic cells (at protein level) (PubMed:26231120). Detected in all tissues tested except for placenta and liver (PubMed:8524829, PubMed:8992885). Detected in peripheral blood plasmacytoid dendritic cells (PubMed:26231120).</text>
</comment>
<comment type="PTM">
    <text evidence="1">A cleavage occurs, separating the extracellular domain from the transmembrane segment. This process called 'ectodomain shedding' is thought to be involved in receptor desensitization, signal transduction and/or membrane localization (By similarity).</text>
</comment>
<comment type="similarity">
    <text evidence="25">Belongs to the protein-tyrosine phosphatase family. Receptor class 2A subfamily.</text>
</comment>
<comment type="sequence caution" evidence="25">
    <conflict type="frameshift">
        <sequence resource="EMBL-CDS" id="AAC50567"/>
    </conflict>
</comment>
<keyword id="KW-0002">3D-structure</keyword>
<keyword id="KW-0025">Alternative splicing</keyword>
<keyword id="KW-0130">Cell adhesion</keyword>
<keyword id="KW-1003">Cell membrane</keyword>
<keyword id="KW-0966">Cell projection</keyword>
<keyword id="KW-0968">Cytoplasmic vesicle</keyword>
<keyword id="KW-1015">Disulfide bond</keyword>
<keyword id="KW-0325">Glycoprotein</keyword>
<keyword id="KW-0358">Heparin-binding</keyword>
<keyword id="KW-0378">Hydrolase</keyword>
<keyword id="KW-0393">Immunoglobulin domain</keyword>
<keyword id="KW-0472">Membrane</keyword>
<keyword id="KW-0904">Protein phosphatase</keyword>
<keyword id="KW-1267">Proteomics identification</keyword>
<keyword id="KW-0675">Receptor</keyword>
<keyword id="KW-1185">Reference proteome</keyword>
<keyword id="KW-0677">Repeat</keyword>
<keyword id="KW-0732">Signal</keyword>
<keyword id="KW-0770">Synapse</keyword>
<keyword id="KW-0771">Synaptosome</keyword>
<keyword id="KW-0812">Transmembrane</keyword>
<keyword id="KW-1133">Transmembrane helix</keyword>
<organism>
    <name type="scientific">Homo sapiens</name>
    <name type="common">Human</name>
    <dbReference type="NCBI Taxonomy" id="9606"/>
    <lineage>
        <taxon>Eukaryota</taxon>
        <taxon>Metazoa</taxon>
        <taxon>Chordata</taxon>
        <taxon>Craniata</taxon>
        <taxon>Vertebrata</taxon>
        <taxon>Euteleostomi</taxon>
        <taxon>Mammalia</taxon>
        <taxon>Eutheria</taxon>
        <taxon>Euarchontoglires</taxon>
        <taxon>Primates</taxon>
        <taxon>Haplorrhini</taxon>
        <taxon>Catarrhini</taxon>
        <taxon>Hominidae</taxon>
        <taxon>Homo</taxon>
    </lineage>
</organism>
<proteinExistence type="evidence at protein level"/>
<feature type="signal peptide" evidence="5">
    <location>
        <begin position="1"/>
        <end position="29"/>
    </location>
</feature>
<feature type="chain" id="PRO_0000025462" description="Receptor-type tyrosine-protein phosphatase S">
    <location>
        <begin position="30"/>
        <end position="1948"/>
    </location>
</feature>
<feature type="topological domain" description="Extracellular" evidence="5">
    <location>
        <begin position="30"/>
        <end position="1282"/>
    </location>
</feature>
<feature type="transmembrane region" description="Helical" evidence="5">
    <location>
        <begin position="1283"/>
        <end position="1303"/>
    </location>
</feature>
<feature type="topological domain" description="Cytoplasmic" evidence="5">
    <location>
        <begin position="1304"/>
        <end position="1948"/>
    </location>
</feature>
<feature type="domain" description="Ig-like C2-type 1">
    <location>
        <begin position="33"/>
        <end position="123"/>
    </location>
</feature>
<feature type="domain" description="Ig-like C2-type 2">
    <location>
        <begin position="135"/>
        <end position="233"/>
    </location>
</feature>
<feature type="domain" description="Ig-like C2-type 3">
    <location>
        <begin position="245"/>
        <end position="327"/>
    </location>
</feature>
<feature type="domain" description="Fibronectin type-III 1" evidence="8">
    <location>
        <begin position="334"/>
        <end position="424"/>
    </location>
</feature>
<feature type="domain" description="Fibronectin type-III 2" evidence="8">
    <location>
        <begin position="429"/>
        <end position="523"/>
    </location>
</feature>
<feature type="domain" description="Fibronectin type-III 3" evidence="8">
    <location>
        <begin position="527"/>
        <end position="616"/>
    </location>
</feature>
<feature type="domain" description="Fibronectin type-III 4" evidence="8">
    <location>
        <begin position="621"/>
        <end position="718"/>
    </location>
</feature>
<feature type="domain" description="Fibronectin type-III 5" evidence="8">
    <location>
        <begin position="723"/>
        <end position="831"/>
    </location>
</feature>
<feature type="domain" description="Fibronectin type-III 6" evidence="8">
    <location>
        <begin position="832"/>
        <end position="930"/>
    </location>
</feature>
<feature type="domain" description="Fibronectin type-III 7" evidence="8">
    <location>
        <begin position="931"/>
        <end position="1033"/>
    </location>
</feature>
<feature type="domain" description="Fibronectin type-III 8" evidence="8">
    <location>
        <begin position="1036"/>
        <end position="1120"/>
    </location>
</feature>
<feature type="domain" description="Tyrosine-protein phosphatase 1" evidence="7">
    <location>
        <begin position="1393"/>
        <end position="1648"/>
    </location>
</feature>
<feature type="domain" description="Tyrosine-protein phosphatase 2" evidence="7">
    <location>
        <begin position="1680"/>
        <end position="1939"/>
    </location>
</feature>
<feature type="region of interest" description="Important for binding to glycosaminoglycan chains" evidence="2">
    <location>
        <begin position="68"/>
        <end position="72"/>
    </location>
</feature>
<feature type="region of interest" description="Disordered" evidence="10">
    <location>
        <begin position="700"/>
        <end position="724"/>
    </location>
</feature>
<feature type="region of interest" description="Disordered" evidence="10">
    <location>
        <begin position="1311"/>
        <end position="1340"/>
    </location>
</feature>
<feature type="compositionally biased region" description="Low complexity" evidence="10">
    <location>
        <begin position="701"/>
        <end position="713"/>
    </location>
</feature>
<feature type="compositionally biased region" description="Basic and acidic residues" evidence="10">
    <location>
        <begin position="1311"/>
        <end position="1321"/>
    </location>
</feature>
<feature type="compositionally biased region" description="Basic and acidic residues" evidence="10">
    <location>
        <begin position="1331"/>
        <end position="1340"/>
    </location>
</feature>
<feature type="active site" description="Phosphocysteine intermediate" evidence="26">
    <location>
        <position position="1589"/>
    </location>
</feature>
<feature type="active site" description="Phosphocysteine intermediate" evidence="1">
    <location>
        <position position="1880"/>
    </location>
</feature>
<feature type="binding site" evidence="1">
    <location>
        <position position="1557"/>
    </location>
    <ligand>
        <name>substrate</name>
    </ligand>
</feature>
<feature type="binding site" evidence="1">
    <location>
        <begin position="1589"/>
        <end position="1595"/>
    </location>
    <ligand>
        <name>substrate</name>
    </ligand>
</feature>
<feature type="binding site" evidence="1">
    <location>
        <position position="1633"/>
    </location>
    <ligand>
        <name>substrate</name>
    </ligand>
</feature>
<feature type="site" description="Cleavage" evidence="1">
    <location>
        <begin position="1197"/>
        <end position="1198"/>
    </location>
</feature>
<feature type="glycosylation site" description="N-linked (GlcNAc...) asparagine" evidence="17 32">
    <location>
        <position position="263"/>
    </location>
</feature>
<feature type="glycosylation site" description="N-linked (GlcNAc...) asparagine" evidence="17 32">
    <location>
        <position position="308"/>
    </location>
</feature>
<feature type="glycosylation site" description="N-linked (GlcNAc...) asparagine" evidence="12 14 15">
    <location>
        <position position="733"/>
    </location>
</feature>
<feature type="glycosylation site" description="N-linked (GlcNAc...) asparagine" evidence="5">
    <location>
        <position position="940"/>
    </location>
</feature>
<feature type="disulfide bond" evidence="6 16 17 28 29 30 32">
    <location>
        <begin position="54"/>
        <end position="107"/>
    </location>
</feature>
<feature type="disulfide bond" evidence="6 28 29 30 32">
    <location>
        <begin position="156"/>
        <end position="216"/>
    </location>
</feature>
<feature type="disulfide bond" evidence="6 28 29 30 32">
    <location>
        <begin position="266"/>
        <end position="311"/>
    </location>
</feature>
<feature type="splice variant" id="VSP_050021" description="In isoform PTPS-MEA, isoform 2 and isoform 3." evidence="23 24">
    <location>
        <begin position="190"/>
        <end position="198"/>
    </location>
</feature>
<feature type="splice variant" id="VSP_050022" description="In isoform PTPS-MEB, isoform 2 and isoform 3." evidence="23 24">
    <location>
        <begin position="236"/>
        <end position="239"/>
    </location>
</feature>
<feature type="splice variant" id="VSP_050023" description="In isoform PTPS-F4-7 and isoform 3." evidence="23">
    <location>
        <begin position="617"/>
        <end position="1034"/>
    </location>
</feature>
<feature type="splice variant" id="VSP_050024" description="In isoform PTPS-MEC and isoform 2." evidence="24">
    <location>
        <begin position="784"/>
        <end position="792"/>
    </location>
</feature>
<feature type="splice variant" id="VSP_050025" description="In isoform PTPS-F4-7 and isoform 3." evidence="23">
    <original>V</original>
    <variation>I</variation>
    <location>
        <position position="1035"/>
    </location>
</feature>
<feature type="splice variant" id="VSP_050026" description="In isoform PTPS-MEB, isoform 2 and isoform 3." evidence="23 24">
    <location>
        <begin position="1350"/>
        <end position="1365"/>
    </location>
</feature>
<feature type="splice variant" id="VSP_050027" description="In isoform PTPS-MEB, isoform 2 and isoform 3." evidence="23 24">
    <original>S</original>
    <variation>G</variation>
    <location>
        <position position="1366"/>
    </location>
</feature>
<feature type="sequence variant" id="VAR_035649" description="In a colorectal cancer sample; somatic mutation; dbSNP:rs775778266." evidence="13">
    <original>T</original>
    <variation>M</variation>
    <location>
        <position position="996"/>
    </location>
</feature>
<feature type="sequence variant" id="VAR_047277" description="In dbSNP:rs4807697." evidence="11 19 20 22">
    <original>C</original>
    <variation>R</variation>
    <location>
        <position position="1457"/>
    </location>
</feature>
<feature type="mutagenesis site" description="Abolishes interaction with NTRK3; when associated with A-100." evidence="17">
    <original>R</original>
    <variation>A</variation>
    <location>
        <position position="97"/>
    </location>
</feature>
<feature type="mutagenesis site" description="Abolishes interaction with NTRK3; when associated with A-97." evidence="17">
    <original>R</original>
    <variation>A</variation>
    <location>
        <position position="100"/>
    </location>
</feature>
<feature type="mutagenesis site" description="Abolishes interaction with NTRK3." evidence="17">
    <original>Y</original>
    <variation>S</variation>
    <location>
        <position position="233"/>
    </location>
</feature>
<feature type="mutagenesis site" description="Decreases interaction with NTRK3." evidence="17">
    <original>RR</original>
    <variation>AA</variation>
    <location>
        <begin position="241"/>
        <end position="242"/>
    </location>
</feature>
<feature type="sequence conflict" description="In Ref. 2; AAC50567." evidence="25" ref="2">
    <original>G</original>
    <variation>R</variation>
    <location>
        <position position="48"/>
    </location>
</feature>
<feature type="sequence conflict" description="In Ref. 2; AAC50567." evidence="25" ref="2">
    <original>SA</original>
    <variation>RP</variation>
    <location>
        <begin position="428"/>
        <end position="429"/>
    </location>
</feature>
<feature type="sequence conflict" description="In Ref. 1; AAC50299." evidence="25" ref="1">
    <original>RSPA</original>
    <variation>LGPV</variation>
    <location>
        <begin position="742"/>
        <end position="745"/>
    </location>
</feature>
<feature type="sequence conflict" description="In Ref. 2; AAC50567." evidence="25" ref="2">
    <original>GA</original>
    <variation>RR</variation>
    <location>
        <begin position="765"/>
        <end position="766"/>
    </location>
</feature>
<feature type="sequence conflict" description="In Ref. 1; AAC50299." evidence="25" ref="1">
    <original>A</original>
    <variation>G</variation>
    <location>
        <position position="768"/>
    </location>
</feature>
<feature type="sequence conflict" description="In Ref. 2; AAC50567." evidence="25" ref="2">
    <original>R</original>
    <variation>P</variation>
    <location>
        <position position="910"/>
    </location>
</feature>
<feature type="sequence conflict" description="In Ref. 1; AAC50299." evidence="25" ref="1">
    <original>L</original>
    <variation>V</variation>
    <location>
        <position position="995"/>
    </location>
</feature>
<feature type="sequence conflict" description="In Ref. 1; AAC50299." evidence="25" ref="1">
    <original>SL</original>
    <variation>TV</variation>
    <location>
        <begin position="1195"/>
        <end position="1196"/>
    </location>
</feature>
<feature type="sequence conflict" description="In Ref. 3; AAC62834." evidence="25" ref="3">
    <location>
        <begin position="1310"/>
        <end position="1313"/>
    </location>
</feature>
<feature type="sequence conflict" description="In Ref. 1; AAC50299." evidence="25" ref="1">
    <original>S</original>
    <variation>F</variation>
    <location>
        <position position="1431"/>
    </location>
</feature>
<feature type="sequence conflict" description="In Ref. 6; AAB21146." evidence="25" ref="6">
    <original>E</original>
    <variation>D</variation>
    <location>
        <position position="1546"/>
    </location>
</feature>
<feature type="sequence conflict" description="In Ref. 6; AAB21146." evidence="25" ref="6">
    <original>V</original>
    <variation>A</variation>
    <location>
        <position position="1587"/>
    </location>
</feature>
<feature type="sequence conflict" description="In Ref. 2; AAC50567." evidence="25" ref="2">
    <original>N</original>
    <variation>K</variation>
    <location>
        <position position="1705"/>
    </location>
</feature>
<feature type="strand" evidence="34">
    <location>
        <begin position="31"/>
        <end position="37"/>
    </location>
</feature>
<feature type="strand" evidence="34">
    <location>
        <begin position="42"/>
        <end position="45"/>
    </location>
</feature>
<feature type="strand" evidence="34">
    <location>
        <begin position="50"/>
        <end position="60"/>
    </location>
</feature>
<feature type="strand" evidence="34">
    <location>
        <begin position="63"/>
        <end position="68"/>
    </location>
</feature>
<feature type="turn" evidence="37">
    <location>
        <begin position="69"/>
        <end position="71"/>
    </location>
</feature>
<feature type="strand" evidence="34">
    <location>
        <begin position="75"/>
        <end position="83"/>
    </location>
</feature>
<feature type="helix" evidence="34">
    <location>
        <begin position="84"/>
        <end position="86"/>
    </location>
</feature>
<feature type="strand" evidence="34">
    <location>
        <begin position="88"/>
        <end position="93"/>
    </location>
</feature>
<feature type="turn" evidence="34">
    <location>
        <begin position="98"/>
        <end position="101"/>
    </location>
</feature>
<feature type="strand" evidence="34">
    <location>
        <begin position="103"/>
        <end position="111"/>
    </location>
</feature>
<feature type="strand" evidence="34">
    <location>
        <begin position="114"/>
        <end position="125"/>
    </location>
</feature>
<feature type="helix" evidence="34">
    <location>
        <begin position="127"/>
        <end position="129"/>
    </location>
</feature>
<feature type="strand" evidence="34">
    <location>
        <begin position="136"/>
        <end position="139"/>
    </location>
</feature>
<feature type="strand" evidence="34">
    <location>
        <begin position="144"/>
        <end position="147"/>
    </location>
</feature>
<feature type="strand" evidence="34">
    <location>
        <begin position="152"/>
        <end position="154"/>
    </location>
</feature>
<feature type="strand" evidence="34">
    <location>
        <begin position="157"/>
        <end position="159"/>
    </location>
</feature>
<feature type="strand" evidence="34">
    <location>
        <begin position="165"/>
        <end position="170"/>
    </location>
</feature>
<feature type="helix" evidence="34">
    <location>
        <begin position="177"/>
        <end position="179"/>
    </location>
</feature>
<feature type="turn" evidence="34">
    <location>
        <begin position="180"/>
        <end position="182"/>
    </location>
</feature>
<feature type="strand" evidence="34">
    <location>
        <begin position="183"/>
        <end position="186"/>
    </location>
</feature>
<feature type="strand" evidence="34">
    <location>
        <begin position="201"/>
        <end position="205"/>
    </location>
</feature>
<feature type="helix" evidence="34">
    <location>
        <begin position="208"/>
        <end position="210"/>
    </location>
</feature>
<feature type="strand" evidence="34">
    <location>
        <begin position="212"/>
        <end position="220"/>
    </location>
</feature>
<feature type="strand" evidence="34">
    <location>
        <begin position="223"/>
        <end position="226"/>
    </location>
</feature>
<feature type="strand" evidence="34">
    <location>
        <begin position="230"/>
        <end position="235"/>
    </location>
</feature>
<feature type="strand" evidence="35">
    <location>
        <begin position="243"/>
        <end position="249"/>
    </location>
</feature>
<feature type="strand" evidence="37">
    <location>
        <begin position="254"/>
        <end position="256"/>
    </location>
</feature>
<feature type="strand" evidence="35">
    <location>
        <begin position="262"/>
        <end position="272"/>
    </location>
</feature>
<feature type="strand" evidence="35">
    <location>
        <begin position="275"/>
        <end position="280"/>
    </location>
</feature>
<feature type="strand" evidence="35">
    <location>
        <begin position="288"/>
        <end position="290"/>
    </location>
</feature>
<feature type="strand" evidence="35">
    <location>
        <begin position="293"/>
        <end position="300"/>
    </location>
</feature>
<feature type="strand" evidence="35">
    <location>
        <begin position="307"/>
        <end position="315"/>
    </location>
</feature>
<feature type="strand" evidence="35">
    <location>
        <begin position="318"/>
        <end position="327"/>
    </location>
</feature>
<feature type="strand" evidence="37">
    <location>
        <begin position="339"/>
        <end position="343"/>
    </location>
</feature>
<feature type="strand" evidence="37">
    <location>
        <begin position="348"/>
        <end position="351"/>
    </location>
</feature>
<feature type="strand" evidence="37">
    <location>
        <begin position="361"/>
        <end position="370"/>
    </location>
</feature>
<feature type="strand" evidence="37">
    <location>
        <begin position="377"/>
        <end position="382"/>
    </location>
</feature>
<feature type="strand" evidence="37">
    <location>
        <begin position="384"/>
        <end position="389"/>
    </location>
</feature>
<feature type="strand" evidence="37">
    <location>
        <begin position="397"/>
        <end position="405"/>
    </location>
</feature>
<feature type="strand" evidence="37">
    <location>
        <begin position="410"/>
        <end position="413"/>
    </location>
</feature>
<feature type="strand" evidence="37">
    <location>
        <begin position="417"/>
        <end position="420"/>
    </location>
</feature>
<feature type="strand" evidence="37">
    <location>
        <begin position="431"/>
        <end position="441"/>
    </location>
</feature>
<feature type="strand" evidence="37">
    <location>
        <begin position="443"/>
        <end position="448"/>
    </location>
</feature>
<feature type="strand" evidence="37">
    <location>
        <begin position="457"/>
        <end position="466"/>
    </location>
</feature>
<feature type="helix" evidence="37">
    <location>
        <begin position="472"/>
        <end position="474"/>
    </location>
</feature>
<feature type="strand" evidence="37">
    <location>
        <begin position="475"/>
        <end position="479"/>
    </location>
</feature>
<feature type="strand" evidence="37">
    <location>
        <begin position="482"/>
        <end position="488"/>
    </location>
</feature>
<feature type="strand" evidence="37">
    <location>
        <begin position="496"/>
        <end position="507"/>
    </location>
</feature>
<feature type="strand" evidence="37">
    <location>
        <begin position="516"/>
        <end position="524"/>
    </location>
</feature>
<feature type="strand" evidence="37">
    <location>
        <begin position="529"/>
        <end position="537"/>
    </location>
</feature>
<feature type="strand" evidence="37">
    <location>
        <begin position="540"/>
        <end position="546"/>
    </location>
</feature>
<feature type="strand" evidence="37">
    <location>
        <begin position="554"/>
        <end position="562"/>
    </location>
</feature>
<feature type="turn" evidence="37">
    <location>
        <begin position="563"/>
        <end position="565"/>
    </location>
</feature>
<feature type="strand" evidence="37">
    <location>
        <begin position="569"/>
        <end position="573"/>
    </location>
</feature>
<feature type="strand" evidence="37">
    <location>
        <begin position="577"/>
        <end position="581"/>
    </location>
</feature>
<feature type="strand" evidence="37">
    <location>
        <begin position="589"/>
        <end position="598"/>
    </location>
</feature>
<feature type="strand" evidence="37">
    <location>
        <begin position="601"/>
        <end position="605"/>
    </location>
</feature>
<feature type="strand" evidence="37">
    <location>
        <begin position="609"/>
        <end position="612"/>
    </location>
</feature>
<feature type="helix" evidence="33">
    <location>
        <begin position="1375"/>
        <end position="1377"/>
    </location>
</feature>
<feature type="helix" evidence="33">
    <location>
        <begin position="1378"/>
        <end position="1398"/>
    </location>
</feature>
<feature type="helix" evidence="33">
    <location>
        <begin position="1409"/>
        <end position="1412"/>
    </location>
</feature>
<feature type="turn" evidence="33">
    <location>
        <begin position="1414"/>
        <end position="1416"/>
    </location>
</feature>
<feature type="helix" evidence="33">
    <location>
        <begin position="1417"/>
        <end position="1419"/>
    </location>
</feature>
<feature type="helix" evidence="33">
    <location>
        <begin position="1429"/>
        <end position="1431"/>
    </location>
</feature>
<feature type="strand" evidence="33">
    <location>
        <begin position="1432"/>
        <end position="1434"/>
    </location>
</feature>
<feature type="turn" evidence="33">
    <location>
        <begin position="1442"/>
        <end position="1445"/>
    </location>
</feature>
<feature type="strand" evidence="33">
    <location>
        <begin position="1446"/>
        <end position="1454"/>
    </location>
</feature>
<feature type="strand" evidence="33">
    <location>
        <begin position="1457"/>
        <end position="1464"/>
    </location>
</feature>
<feature type="helix" evidence="33">
    <location>
        <begin position="1469"/>
        <end position="1471"/>
    </location>
</feature>
<feature type="helix" evidence="33">
    <location>
        <begin position="1472"/>
        <end position="1481"/>
    </location>
</feature>
<feature type="strand" evidence="33">
    <location>
        <begin position="1486"/>
        <end position="1489"/>
    </location>
</feature>
<feature type="strand" evidence="33">
    <location>
        <begin position="1493"/>
        <end position="1495"/>
    </location>
</feature>
<feature type="strand" evidence="33">
    <location>
        <begin position="1507"/>
        <end position="1513"/>
    </location>
</feature>
<feature type="strand" evidence="33">
    <location>
        <begin position="1516"/>
        <end position="1525"/>
    </location>
</feature>
<feature type="strand" evidence="33">
    <location>
        <begin position="1527"/>
        <end position="1538"/>
    </location>
</feature>
<feature type="strand" evidence="33">
    <location>
        <begin position="1545"/>
        <end position="1552"/>
    </location>
</feature>
<feature type="strand" evidence="33">
    <location>
        <begin position="1557"/>
        <end position="1560"/>
    </location>
</feature>
<feature type="strand" evidence="36">
    <location>
        <begin position="1562"/>
        <end position="1564"/>
    </location>
</feature>
<feature type="helix" evidence="33">
    <location>
        <begin position="1565"/>
        <end position="1577"/>
    </location>
</feature>
<feature type="strand" evidence="33">
    <location>
        <begin position="1585"/>
        <end position="1594"/>
    </location>
</feature>
<feature type="helix" evidence="33">
    <location>
        <begin position="1595"/>
        <end position="1612"/>
    </location>
</feature>
<feature type="helix" evidence="33">
    <location>
        <begin position="1617"/>
        <end position="1625"/>
    </location>
</feature>
<feature type="helix" evidence="33">
    <location>
        <begin position="1635"/>
        <end position="1650"/>
    </location>
</feature>
<feature type="helix" evidence="33">
    <location>
        <begin position="1658"/>
        <end position="1660"/>
    </location>
</feature>
<feature type="helix" evidence="33">
    <location>
        <begin position="1661"/>
        <end position="1668"/>
    </location>
</feature>
<feature type="strand" evidence="33">
    <location>
        <begin position="1676"/>
        <end position="1678"/>
    </location>
</feature>
<feature type="helix" evidence="33">
    <location>
        <begin position="1679"/>
        <end position="1685"/>
    </location>
</feature>
<feature type="helix" evidence="33">
    <location>
        <begin position="1698"/>
        <end position="1701"/>
    </location>
</feature>
<feature type="turn" evidence="33">
    <location>
        <begin position="1703"/>
        <end position="1705"/>
    </location>
</feature>
<feature type="helix" evidence="33">
    <location>
        <begin position="1706"/>
        <end position="1708"/>
    </location>
</feature>
<feature type="turn" evidence="33">
    <location>
        <begin position="1718"/>
        <end position="1720"/>
    </location>
</feature>
<feature type="turn" evidence="33">
    <location>
        <begin position="1728"/>
        <end position="1730"/>
    </location>
</feature>
<feature type="turn" evidence="36">
    <location>
        <begin position="1731"/>
        <end position="1734"/>
    </location>
</feature>
<feature type="strand" evidence="33">
    <location>
        <begin position="1737"/>
        <end position="1741"/>
    </location>
</feature>
<feature type="strand" evidence="33">
    <location>
        <begin position="1744"/>
        <end position="1746"/>
    </location>
</feature>
<feature type="strand" evidence="33">
    <location>
        <begin position="1750"/>
        <end position="1753"/>
    </location>
</feature>
<feature type="helix" evidence="33">
    <location>
        <begin position="1758"/>
        <end position="1760"/>
    </location>
</feature>
<feature type="helix" evidence="33">
    <location>
        <begin position="1761"/>
        <end position="1770"/>
    </location>
</feature>
<feature type="strand" evidence="33">
    <location>
        <begin position="1775"/>
        <end position="1778"/>
    </location>
</feature>
<feature type="strand" evidence="33">
    <location>
        <begin position="1782"/>
        <end position="1784"/>
    </location>
</feature>
<feature type="strand" evidence="33">
    <location>
        <begin position="1796"/>
        <end position="1798"/>
    </location>
</feature>
<feature type="strand" evidence="33">
    <location>
        <begin position="1800"/>
        <end position="1802"/>
    </location>
</feature>
<feature type="strand" evidence="33">
    <location>
        <begin position="1805"/>
        <end position="1814"/>
    </location>
</feature>
<feature type="strand" evidence="33">
    <location>
        <begin position="1816"/>
        <end position="1827"/>
    </location>
</feature>
<feature type="turn" evidence="33">
    <location>
        <begin position="1828"/>
        <end position="1830"/>
    </location>
</feature>
<feature type="strand" evidence="33">
    <location>
        <begin position="1833"/>
        <end position="1841"/>
    </location>
</feature>
<feature type="strand" evidence="33">
    <location>
        <begin position="1846"/>
        <end position="1848"/>
    </location>
</feature>
<feature type="helix" evidence="33">
    <location>
        <begin position="1854"/>
        <end position="1869"/>
    </location>
</feature>
<feature type="strand" evidence="33">
    <location>
        <begin position="1876"/>
        <end position="1884"/>
    </location>
</feature>
<feature type="helix" evidence="33">
    <location>
        <begin position="1885"/>
        <end position="1903"/>
    </location>
</feature>
<feature type="strand" evidence="33">
    <location>
        <begin position="1904"/>
        <end position="1906"/>
    </location>
</feature>
<feature type="helix" evidence="33">
    <location>
        <begin position="1908"/>
        <end position="1915"/>
    </location>
</feature>
<feature type="turn" evidence="33">
    <location>
        <begin position="1916"/>
        <end position="1918"/>
    </location>
</feature>
<feature type="helix" evidence="33">
    <location>
        <begin position="1926"/>
        <end position="1941"/>
    </location>
</feature>
<name>PTPRS_HUMAN</name>
<reference key="1">
    <citation type="journal article" date="1995" name="Proc. Natl. Acad. Sci. U.S.A.">
        <title>The LAR/PTP delta/PTP sigma subfamily of transmembrane protein-tyrosine-phosphatases: multiple human LAR, PTP delta, and PTP sigma isoforms are expressed in a tissue-specific manner and associate with the LAR-interacting protein LIP.1.</title>
        <authorList>
            <person name="Pulido R."/>
            <person name="Serra-Pages C."/>
            <person name="Tang M."/>
            <person name="Streuli M."/>
        </authorList>
    </citation>
    <scope>NUCLEOTIDE SEQUENCE [MRNA] (ISOFORM 1)</scope>
    <scope>CATALYTIC ACTIVITY</scope>
    <scope>FUNCTION</scope>
    <scope>INTERACTION WITH PPFIA1</scope>
    <scope>ALTERNATIVE SPLICING</scope>
    <scope>TISSUE SPECIFICITY</scope>
    <scope>VARIANT ARG-1457</scope>
    <source>
        <tissue>Fetal brain</tissue>
    </source>
</reference>
<reference key="2">
    <citation type="journal article" date="1996" name="J. Bone Miner. Res.">
        <title>Human protein tyrosine phosphatase-sigma: alternative splicing and inhibition by bisphosphonates.</title>
        <authorList>
            <person name="Endo N."/>
            <person name="Rutledge S.J."/>
            <person name="Opas E.E."/>
            <person name="Vogel R."/>
            <person name="Rodan G.A."/>
            <person name="Schmidt A."/>
        </authorList>
    </citation>
    <scope>NUCLEOTIDE SEQUENCE [MRNA] (ISOFORM 2)</scope>
    <scope>CATALYTIC ACTIVITY</scope>
    <scope>TISSUE SPECIFICITY</scope>
    <scope>ALTERNATIVE SPLICING</scope>
    <scope>VARIANT ARG-1457</scope>
</reference>
<reference key="3">
    <citation type="journal article" date="2004" name="Nature">
        <title>The DNA sequence and biology of human chromosome 19.</title>
        <authorList>
            <person name="Grimwood J."/>
            <person name="Gordon L.A."/>
            <person name="Olsen A.S."/>
            <person name="Terry A."/>
            <person name="Schmutz J."/>
            <person name="Lamerdin J.E."/>
            <person name="Hellsten U."/>
            <person name="Goodstein D."/>
            <person name="Couronne O."/>
            <person name="Tran-Gyamfi M."/>
            <person name="Aerts A."/>
            <person name="Altherr M."/>
            <person name="Ashworth L."/>
            <person name="Bajorek E."/>
            <person name="Black S."/>
            <person name="Branscomb E."/>
            <person name="Caenepeel S."/>
            <person name="Carrano A.V."/>
            <person name="Caoile C."/>
            <person name="Chan Y.M."/>
            <person name="Christensen M."/>
            <person name="Cleland C.A."/>
            <person name="Copeland A."/>
            <person name="Dalin E."/>
            <person name="Dehal P."/>
            <person name="Denys M."/>
            <person name="Detter J.C."/>
            <person name="Escobar J."/>
            <person name="Flowers D."/>
            <person name="Fotopulos D."/>
            <person name="Garcia C."/>
            <person name="Georgescu A.M."/>
            <person name="Glavina T."/>
            <person name="Gomez M."/>
            <person name="Gonzales E."/>
            <person name="Groza M."/>
            <person name="Hammon N."/>
            <person name="Hawkins T."/>
            <person name="Haydu L."/>
            <person name="Ho I."/>
            <person name="Huang W."/>
            <person name="Israni S."/>
            <person name="Jett J."/>
            <person name="Kadner K."/>
            <person name="Kimball H."/>
            <person name="Kobayashi A."/>
            <person name="Larionov V."/>
            <person name="Leem S.-H."/>
            <person name="Lopez F."/>
            <person name="Lou Y."/>
            <person name="Lowry S."/>
            <person name="Malfatti S."/>
            <person name="Martinez D."/>
            <person name="McCready P.M."/>
            <person name="Medina C."/>
            <person name="Morgan J."/>
            <person name="Nelson K."/>
            <person name="Nolan M."/>
            <person name="Ovcharenko I."/>
            <person name="Pitluck S."/>
            <person name="Pollard M."/>
            <person name="Popkie A.P."/>
            <person name="Predki P."/>
            <person name="Quan G."/>
            <person name="Ramirez L."/>
            <person name="Rash S."/>
            <person name="Retterer J."/>
            <person name="Rodriguez A."/>
            <person name="Rogers S."/>
            <person name="Salamov A."/>
            <person name="Salazar A."/>
            <person name="She X."/>
            <person name="Smith D."/>
            <person name="Slezak T."/>
            <person name="Solovyev V."/>
            <person name="Thayer N."/>
            <person name="Tice H."/>
            <person name="Tsai M."/>
            <person name="Ustaszewska A."/>
            <person name="Vo N."/>
            <person name="Wagner M."/>
            <person name="Wheeler J."/>
            <person name="Wu K."/>
            <person name="Xie G."/>
            <person name="Yang J."/>
            <person name="Dubchak I."/>
            <person name="Furey T.S."/>
            <person name="DeJong P."/>
            <person name="Dickson M."/>
            <person name="Gordon D."/>
            <person name="Eichler E.E."/>
            <person name="Pennacchio L.A."/>
            <person name="Richardson P."/>
            <person name="Stubbs L."/>
            <person name="Rokhsar D.S."/>
            <person name="Myers R.M."/>
            <person name="Rubin E.M."/>
            <person name="Lucas S.M."/>
        </authorList>
    </citation>
    <scope>NUCLEOTIDE SEQUENCE [LARGE SCALE GENOMIC DNA]</scope>
</reference>
<reference key="4">
    <citation type="submission" date="2005-09" db="EMBL/GenBank/DDBJ databases">
        <authorList>
            <person name="Mural R.J."/>
            <person name="Istrail S."/>
            <person name="Sutton G."/>
            <person name="Florea L."/>
            <person name="Halpern A.L."/>
            <person name="Mobarry C.M."/>
            <person name="Lippert R."/>
            <person name="Walenz B."/>
            <person name="Shatkay H."/>
            <person name="Dew I."/>
            <person name="Miller J.R."/>
            <person name="Flanigan M.J."/>
            <person name="Edwards N.J."/>
            <person name="Bolanos R."/>
            <person name="Fasulo D."/>
            <person name="Halldorsson B.V."/>
            <person name="Hannenhalli S."/>
            <person name="Turner R."/>
            <person name="Yooseph S."/>
            <person name="Lu F."/>
            <person name="Nusskern D.R."/>
            <person name="Shue B.C."/>
            <person name="Zheng X.H."/>
            <person name="Zhong F."/>
            <person name="Delcher A.L."/>
            <person name="Huson D.H."/>
            <person name="Kravitz S.A."/>
            <person name="Mouchard L."/>
            <person name="Reinert K."/>
            <person name="Remington K.A."/>
            <person name="Clark A.G."/>
            <person name="Waterman M.S."/>
            <person name="Eichler E.E."/>
            <person name="Adams M.D."/>
            <person name="Hunkapiller M.W."/>
            <person name="Myers E.W."/>
            <person name="Venter J.C."/>
        </authorList>
    </citation>
    <scope>NUCLEOTIDE SEQUENCE [LARGE SCALE GENOMIC DNA]</scope>
    <scope>VARIANT ARG-1457</scope>
</reference>
<reference key="5">
    <citation type="journal article" date="2004" name="Genome Res.">
        <title>The status, quality, and expansion of the NIH full-length cDNA project: the Mammalian Gene Collection (MGC).</title>
        <authorList>
            <consortium name="The MGC Project Team"/>
        </authorList>
    </citation>
    <scope>NUCLEOTIDE SEQUENCE [LARGE SCALE MRNA] (ISOFORM 3)</scope>
    <scope>VARIANT ARG-1457</scope>
    <source>
        <tissue>Brain</tissue>
    </source>
</reference>
<reference key="6">
    <citation type="journal article" date="1992" name="Cancer Res.">
        <title>Protein-tyrosine phosphatase expression in pre-B cell NALM-6.</title>
        <authorList>
            <person name="Adachi M."/>
            <person name="Sekiya M."/>
            <person name="Arimura Y."/>
            <person name="Takekawa M."/>
            <person name="Itoh F."/>
            <person name="Hinoda Y."/>
            <person name="Imai K."/>
            <person name="Yachi A."/>
        </authorList>
    </citation>
    <scope>NUCLEOTIDE SEQUENCE [MRNA] OF 1503-1589</scope>
</reference>
<reference key="7">
    <citation type="journal article" date="1998" name="J. Biol. Chem.">
        <title>Liprins, a family of LAR transmembrane protein-tyrosine phosphatase-interacting proteins.</title>
        <authorList>
            <person name="Serra-Pages C."/>
            <person name="Medley Q.G."/>
            <person name="Tang M."/>
            <person name="Hart A."/>
            <person name="Streuli M."/>
        </authorList>
    </citation>
    <scope>INTERACTION WITH PPFIA1; PPFIA2 AND PPFIA3</scope>
</reference>
<reference key="8">
    <citation type="journal article" date="2005" name="J. Proteome Res.">
        <title>Human plasma N-glycoproteome analysis by immunoaffinity subtraction, hydrazide chemistry, and mass spectrometry.</title>
        <authorList>
            <person name="Liu T."/>
            <person name="Qian W.-J."/>
            <person name="Gritsenko M.A."/>
            <person name="Camp D.G. II"/>
            <person name="Monroe M.E."/>
            <person name="Moore R.J."/>
            <person name="Smith R.D."/>
        </authorList>
    </citation>
    <scope>GLYCOSYLATION [LARGE SCALE ANALYSIS] AT ASN-733</scope>
    <source>
        <tissue>Plasma</tissue>
    </source>
</reference>
<reference key="9">
    <citation type="journal article" date="2009" name="J. Proteome Res.">
        <title>Glycoproteomics analysis of human liver tissue by combination of multiple enzyme digestion and hydrazide chemistry.</title>
        <authorList>
            <person name="Chen R."/>
            <person name="Jiang X."/>
            <person name="Sun D."/>
            <person name="Han G."/>
            <person name="Wang F."/>
            <person name="Ye M."/>
            <person name="Wang L."/>
            <person name="Zou H."/>
        </authorList>
    </citation>
    <scope>GLYCOSYLATION [LARGE SCALE ANALYSIS] AT ASN-733</scope>
    <source>
        <tissue>Liver</tissue>
    </source>
</reference>
<reference key="10">
    <citation type="journal article" date="2009" name="Nat. Biotechnol.">
        <title>Mass-spectrometric identification and relative quantification of N-linked cell surface glycoproteins.</title>
        <authorList>
            <person name="Wollscheid B."/>
            <person name="Bausch-Fluck D."/>
            <person name="Henderson C."/>
            <person name="O'Brien R."/>
            <person name="Bibel M."/>
            <person name="Schiess R."/>
            <person name="Aebersold R."/>
            <person name="Watts J.D."/>
        </authorList>
    </citation>
    <scope>GLYCOSYLATION [LARGE SCALE ANALYSIS] AT ASN-733</scope>
    <source>
        <tissue>Leukemic T-cell</tissue>
    </source>
</reference>
<reference key="11">
    <citation type="journal article" date="2015" name="Immunity">
        <title>Protein tyrosine phosphatase PTPRS is an inhibitory receptor on human and murine plasmacytoid dendritic cells.</title>
        <authorList>
            <person name="Bunin A."/>
            <person name="Sisirak V."/>
            <person name="Ghosh H.S."/>
            <person name="Grajkowska L.T."/>
            <person name="Hou Z.E."/>
            <person name="Miron M."/>
            <person name="Yang C."/>
            <person name="Ceribelli M."/>
            <person name="Uetani N."/>
            <person name="Chaperot L."/>
            <person name="Plumas J."/>
            <person name="Hendriks W."/>
            <person name="Tremblay M.L."/>
            <person name="Haecker H."/>
            <person name="Staudt L.M."/>
            <person name="Green P.H."/>
            <person name="Bhagat G."/>
            <person name="Reizis B."/>
        </authorList>
    </citation>
    <scope>FUNCTION</scope>
    <scope>SUBCELLULAR LOCATION</scope>
    <scope>TISSUE SPECIFICITY</scope>
</reference>
<reference key="12">
    <citation type="journal article" date="2007" name="J. Struct. Funct. Genomics">
        <title>Structural genomics of protein phosphatases.</title>
        <authorList>
            <person name="Almo S.C."/>
            <person name="Bonanno J.B."/>
            <person name="Sauder J.M."/>
            <person name="Emtage S."/>
            <person name="Dilorenzo T.P."/>
            <person name="Malashkevich V."/>
            <person name="Wasserman S.R."/>
            <person name="Swaminathan S."/>
            <person name="Eswaramoorthy S."/>
            <person name="Agarwal R."/>
            <person name="Kumaran D."/>
            <person name="Madegowda M."/>
            <person name="Ragumani S."/>
            <person name="Patskovsky Y."/>
            <person name="Alvarado J."/>
            <person name="Ramagopal U.A."/>
            <person name="Faber-Barata J."/>
            <person name="Chance M.R."/>
            <person name="Sali A."/>
            <person name="Fiser A."/>
            <person name="Zhang Z.Y."/>
            <person name="Lawrence D.S."/>
            <person name="Burley S.K."/>
        </authorList>
    </citation>
    <scope>X-RAY CRYSTALLOGRAPHY (2.0 ANGSTROMS) OF 1365-1948</scope>
</reference>
<reference evidence="28 29 30" key="13">
    <citation type="journal article" date="2011" name="Science">
        <title>Proteoglycan-specific molecular switch for RPTPsigma clustering and neuronal extension.</title>
        <authorList>
            <person name="Coles C.H."/>
            <person name="Shen Y."/>
            <person name="Tenney A.P."/>
            <person name="Siebold C."/>
            <person name="Sutton G.C."/>
            <person name="Lu W."/>
            <person name="Gallagher J.T."/>
            <person name="Jones E.Y."/>
            <person name="Flanagan J.G."/>
            <person name="Aricescu A.R."/>
        </authorList>
    </citation>
    <scope>X-RAY CRYSTALLOGRAPHY (2.30 ANGSTROMS) OF 30-235</scope>
    <scope>FUNCTION</scope>
    <scope>DISULFIDE BONDS</scope>
</reference>
<reference evidence="31" key="14">
    <citation type="journal article" date="2013" name="Mol. Cells">
        <title>Structure of the catalytic domain of protein tyrosine phosphatase sigma in the sulfenic acid form.</title>
        <authorList>
            <person name="Jeon T.J."/>
            <person name="Chien P.N."/>
            <person name="Chun H.J."/>
            <person name="Ryu S.E."/>
        </authorList>
    </citation>
    <scope>X-RAY CRYSTALLOGRAPHY (2.10 ANGSTROMS) OF 1367-1948</scope>
    <scope>ACTIVE SITE</scope>
</reference>
<reference evidence="32" key="15">
    <citation type="journal article" date="2014" name="Nat. Commun.">
        <title>Structural basis for extracellular cis and trans RPTPsigma signal competition in synaptogenesis.</title>
        <authorList>
            <person name="Coles C.H."/>
            <person name="Mitakidis N."/>
            <person name="Zhang P."/>
            <person name="Elegheert J."/>
            <person name="Lu W."/>
            <person name="Stoker A.W."/>
            <person name="Nakagawa T."/>
            <person name="Craig A.M."/>
            <person name="Jones E.Y."/>
            <person name="Aricescu A.R."/>
        </authorList>
    </citation>
    <scope>X-RAY CRYSTALLOGRAPHY (3.15 ANGSTROMS) OF 30-614</scope>
    <scope>STRUCTURE BY ELECTRON MICROSCOPY</scope>
    <scope>INTERACTION WITH NTRK3</scope>
    <scope>GLYCOSYLATION AT ASN-263 AND ASN-308</scope>
    <scope>DISULFIDE BONDS</scope>
    <scope>MUTAGENESIS OF ARG-97; ARG-100; TYR-233 AND 241-ARG-ARG-242</scope>
</reference>
<reference key="16">
    <citation type="journal article" date="2006" name="Science">
        <title>The consensus coding sequences of human breast and colorectal cancers.</title>
        <authorList>
            <person name="Sjoeblom T."/>
            <person name="Jones S."/>
            <person name="Wood L.D."/>
            <person name="Parsons D.W."/>
            <person name="Lin J."/>
            <person name="Barber T.D."/>
            <person name="Mandelker D."/>
            <person name="Leary R.J."/>
            <person name="Ptak J."/>
            <person name="Silliman N."/>
            <person name="Szabo S."/>
            <person name="Buckhaults P."/>
            <person name="Farrell C."/>
            <person name="Meeh P."/>
            <person name="Markowitz S.D."/>
            <person name="Willis J."/>
            <person name="Dawson D."/>
            <person name="Willson J.K.V."/>
            <person name="Gazdar A.F."/>
            <person name="Hartigan J."/>
            <person name="Wu L."/>
            <person name="Liu C."/>
            <person name="Parmigiani G."/>
            <person name="Park B.H."/>
            <person name="Bachman K.E."/>
            <person name="Papadopoulos N."/>
            <person name="Vogelstein B."/>
            <person name="Kinzler K.W."/>
            <person name="Velculescu V.E."/>
        </authorList>
    </citation>
    <scope>VARIANT [LARGE SCALE ANALYSIS] MET-996</scope>
</reference>
<dbReference type="EC" id="3.1.3.48" evidence="19 27"/>
<dbReference type="EMBL" id="U35234">
    <property type="protein sequence ID" value="AAC50299.1"/>
    <property type="molecule type" value="mRNA"/>
</dbReference>
<dbReference type="EMBL" id="U40317">
    <property type="protein sequence ID" value="AAC50567.1"/>
    <property type="status" value="ALT_FRAME"/>
    <property type="molecule type" value="mRNA"/>
</dbReference>
<dbReference type="EMBL" id="AC005335">
    <property type="status" value="NOT_ANNOTATED_CDS"/>
    <property type="molecule type" value="Genomic_DNA"/>
</dbReference>
<dbReference type="EMBL" id="AC005790">
    <property type="protein sequence ID" value="AAC62832.1"/>
    <property type="molecule type" value="Genomic_DNA"/>
</dbReference>
<dbReference type="EMBL" id="AC005338">
    <property type="protein sequence ID" value="AAC27825.1"/>
    <property type="molecule type" value="Genomic_DNA"/>
</dbReference>
<dbReference type="EMBL" id="AC005788">
    <property type="protein sequence ID" value="AAC62834.1"/>
    <property type="molecule type" value="Genomic_DNA"/>
</dbReference>
<dbReference type="EMBL" id="AC118535">
    <property type="status" value="NOT_ANNOTATED_CDS"/>
    <property type="molecule type" value="Genomic_DNA"/>
</dbReference>
<dbReference type="EMBL" id="CH471139">
    <property type="protein sequence ID" value="EAW69176.1"/>
    <property type="molecule type" value="Genomic_DNA"/>
</dbReference>
<dbReference type="EMBL" id="BC104812">
    <property type="protein sequence ID" value="AAI04813.1"/>
    <property type="molecule type" value="mRNA"/>
</dbReference>
<dbReference type="EMBL" id="BC143287">
    <property type="protein sequence ID" value="AAI43288.1"/>
    <property type="molecule type" value="mRNA"/>
</dbReference>
<dbReference type="EMBL" id="S78080">
    <property type="protein sequence ID" value="AAB21146.2"/>
    <property type="molecule type" value="mRNA"/>
</dbReference>
<dbReference type="CCDS" id="CCDS12139.1">
    <molecule id="Q13332-7"/>
</dbReference>
<dbReference type="CCDS" id="CCDS12140.1">
    <molecule id="Q13332-6"/>
</dbReference>
<dbReference type="CCDS" id="CCDS45930.1">
    <molecule id="Q13332-1"/>
</dbReference>
<dbReference type="RefSeq" id="NP_002841.3">
    <molecule id="Q13332-1"/>
    <property type="nucleotide sequence ID" value="NM_002850.3"/>
</dbReference>
<dbReference type="RefSeq" id="NP_570923.2">
    <molecule id="Q13332-7"/>
    <property type="nucleotide sequence ID" value="NM_130853.3"/>
</dbReference>
<dbReference type="RefSeq" id="NP_570924.2">
    <molecule id="Q13332-6"/>
    <property type="nucleotide sequence ID" value="NM_130854.3"/>
</dbReference>
<dbReference type="RefSeq" id="NP_570925.2">
    <property type="nucleotide sequence ID" value="NM_130855.2"/>
</dbReference>
<dbReference type="RefSeq" id="XP_005259663.1">
    <property type="nucleotide sequence ID" value="XM_005259606.2"/>
</dbReference>
<dbReference type="RefSeq" id="XP_005259666.1">
    <property type="nucleotide sequence ID" value="XM_005259609.1"/>
</dbReference>
<dbReference type="RefSeq" id="XP_016882554.1">
    <molecule id="Q13332-2"/>
    <property type="nucleotide sequence ID" value="XM_017027065.2"/>
</dbReference>
<dbReference type="RefSeq" id="XP_016882555.1">
    <molecule id="Q13332-2"/>
    <property type="nucleotide sequence ID" value="XM_017027066.2"/>
</dbReference>
<dbReference type="RefSeq" id="XP_016882556.1">
    <molecule id="Q13332-2"/>
    <property type="nucleotide sequence ID" value="XM_017027067.2"/>
</dbReference>
<dbReference type="PDB" id="2FH7">
    <property type="method" value="X-ray"/>
    <property type="resolution" value="2.00 A"/>
    <property type="chains" value="A=1365-1948"/>
</dbReference>
<dbReference type="PDB" id="2YD2">
    <property type="method" value="X-ray"/>
    <property type="resolution" value="2.55 A"/>
    <property type="chains" value="A=30-244"/>
</dbReference>
<dbReference type="PDB" id="2YD3">
    <property type="method" value="X-ray"/>
    <property type="resolution" value="2.30 A"/>
    <property type="chains" value="A=30-235"/>
</dbReference>
<dbReference type="PDB" id="2YD9">
    <property type="method" value="X-ray"/>
    <property type="resolution" value="2.60 A"/>
    <property type="chains" value="A=30-334"/>
</dbReference>
<dbReference type="PDB" id="4BPC">
    <property type="method" value="X-ray"/>
    <property type="resolution" value="2.10 A"/>
    <property type="chains" value="A=1367-1948"/>
</dbReference>
<dbReference type="PDB" id="4PBX">
    <property type="method" value="X-ray"/>
    <property type="resolution" value="3.15 A"/>
    <property type="chains" value="A=30-614"/>
</dbReference>
<dbReference type="PDBsum" id="2FH7"/>
<dbReference type="PDBsum" id="2YD2"/>
<dbReference type="PDBsum" id="2YD3"/>
<dbReference type="PDBsum" id="2YD9"/>
<dbReference type="PDBsum" id="4BPC"/>
<dbReference type="PDBsum" id="4PBX"/>
<dbReference type="SMR" id="Q13332"/>
<dbReference type="BioGRID" id="111766">
    <property type="interactions" value="147"/>
</dbReference>
<dbReference type="FunCoup" id="Q13332">
    <property type="interactions" value="1128"/>
</dbReference>
<dbReference type="IntAct" id="Q13332">
    <property type="interactions" value="99"/>
</dbReference>
<dbReference type="MINT" id="Q13332"/>
<dbReference type="STRING" id="9606.ENSP00000467537"/>
<dbReference type="BindingDB" id="Q13332"/>
<dbReference type="ChEMBL" id="CHEMBL2396508"/>
<dbReference type="DrugBank" id="DB00630">
    <property type="generic name" value="Alendronic acid"/>
</dbReference>
<dbReference type="DrugBank" id="DB01077">
    <property type="generic name" value="Etidronic acid"/>
</dbReference>
<dbReference type="GuidetoPHARMACOLOGY" id="1866"/>
<dbReference type="DEPOD" id="PTPRS"/>
<dbReference type="GlyCosmos" id="Q13332">
    <property type="glycosylation" value="4 sites, No reported glycans"/>
</dbReference>
<dbReference type="GlyGen" id="Q13332">
    <property type="glycosylation" value="4 sites, 15 N-linked glycans (2 sites)"/>
</dbReference>
<dbReference type="iPTMnet" id="Q13332"/>
<dbReference type="PhosphoSitePlus" id="Q13332"/>
<dbReference type="BioMuta" id="PTPRS"/>
<dbReference type="DMDM" id="317373519"/>
<dbReference type="jPOST" id="Q13332"/>
<dbReference type="MassIVE" id="Q13332"/>
<dbReference type="PaxDb" id="9606-ENSP00000349932"/>
<dbReference type="PeptideAtlas" id="Q13332"/>
<dbReference type="ProteomicsDB" id="59320">
    <molecule id="Q13332-1"/>
</dbReference>
<dbReference type="ProteomicsDB" id="59321">
    <molecule id="Q13332-2"/>
</dbReference>
<dbReference type="ProteomicsDB" id="59322">
    <molecule id="Q13332-3"/>
</dbReference>
<dbReference type="ProteomicsDB" id="59323">
    <molecule id="Q13332-4"/>
</dbReference>
<dbReference type="ProteomicsDB" id="59324">
    <molecule id="Q13332-5"/>
</dbReference>
<dbReference type="ProteomicsDB" id="59325">
    <molecule id="Q13332-6"/>
</dbReference>
<dbReference type="ProteomicsDB" id="59326">
    <molecule id="Q13332-7"/>
</dbReference>
<dbReference type="Pumba" id="Q13332"/>
<dbReference type="ABCD" id="Q13332">
    <property type="antibodies" value="1 sequenced antibody"/>
</dbReference>
<dbReference type="Antibodypedia" id="23795">
    <property type="antibodies" value="219 antibodies from 27 providers"/>
</dbReference>
<dbReference type="DNASU" id="5802"/>
<dbReference type="Ensembl" id="ENST00000262963.11">
    <molecule id="Q13332-1"/>
    <property type="protein sequence ID" value="ENSP00000262963.8"/>
    <property type="gene ID" value="ENSG00000105426.19"/>
</dbReference>
<dbReference type="Ensembl" id="ENST00000587303.5">
    <molecule id="Q13332-1"/>
    <property type="protein sequence ID" value="ENSP00000467537.1"/>
    <property type="gene ID" value="ENSG00000105426.19"/>
</dbReference>
<dbReference type="Ensembl" id="ENST00000588012.5">
    <molecule id="Q13332-6"/>
    <property type="protein sequence ID" value="ENSP00000465443.1"/>
    <property type="gene ID" value="ENSG00000105426.19"/>
</dbReference>
<dbReference type="Ensembl" id="ENST00000592099.5">
    <molecule id="Q13332-7"/>
    <property type="protein sequence ID" value="ENSP00000467398.1"/>
    <property type="gene ID" value="ENSG00000105426.19"/>
</dbReference>
<dbReference type="GeneID" id="5802"/>
<dbReference type="KEGG" id="hsa:5802"/>
<dbReference type="MANE-Select" id="ENST00000262963.11">
    <property type="protein sequence ID" value="ENSP00000262963.8"/>
    <property type="RefSeq nucleotide sequence ID" value="NM_002850.4"/>
    <property type="RefSeq protein sequence ID" value="NP_002841.3"/>
</dbReference>
<dbReference type="UCSC" id="uc002mbv.3">
    <molecule id="Q13332-1"/>
    <property type="organism name" value="human"/>
</dbReference>
<dbReference type="AGR" id="HGNC:9681"/>
<dbReference type="CTD" id="5802"/>
<dbReference type="DisGeNET" id="5802"/>
<dbReference type="GeneCards" id="PTPRS"/>
<dbReference type="HGNC" id="HGNC:9681">
    <property type="gene designation" value="PTPRS"/>
</dbReference>
<dbReference type="HPA" id="ENSG00000105426">
    <property type="expression patterns" value="Low tissue specificity"/>
</dbReference>
<dbReference type="MIM" id="601576">
    <property type="type" value="gene"/>
</dbReference>
<dbReference type="neXtProt" id="NX_Q13332"/>
<dbReference type="OpenTargets" id="ENSG00000105426"/>
<dbReference type="PharmGKB" id="PA34026"/>
<dbReference type="VEuPathDB" id="HostDB:ENSG00000105426"/>
<dbReference type="eggNOG" id="KOG4228">
    <property type="taxonomic scope" value="Eukaryota"/>
</dbReference>
<dbReference type="GeneTree" id="ENSGT00940000153617"/>
<dbReference type="HOGENOM" id="CLU_001645_4_2_1"/>
<dbReference type="InParanoid" id="Q13332"/>
<dbReference type="OMA" id="KPHTEYA"/>
<dbReference type="OrthoDB" id="10253954at2759"/>
<dbReference type="PAN-GO" id="Q13332">
    <property type="GO annotations" value="3 GO annotations based on evolutionary models"/>
</dbReference>
<dbReference type="PhylomeDB" id="Q13332"/>
<dbReference type="TreeFam" id="TF312900"/>
<dbReference type="BRENDA" id="3.1.3.48">
    <property type="organism ID" value="2681"/>
</dbReference>
<dbReference type="PathwayCommons" id="Q13332"/>
<dbReference type="Reactome" id="R-HSA-3000178">
    <property type="pathway name" value="ECM proteoglycans"/>
</dbReference>
<dbReference type="Reactome" id="R-HSA-388844">
    <property type="pathway name" value="Receptor-type tyrosine-protein phosphatases"/>
</dbReference>
<dbReference type="Reactome" id="R-HSA-8849932">
    <property type="pathway name" value="Synaptic adhesion-like molecules"/>
</dbReference>
<dbReference type="Reactome" id="R-HSA-9034015">
    <property type="pathway name" value="Signaling by NTRK3 (TRKC)"/>
</dbReference>
<dbReference type="SignaLink" id="Q13332"/>
<dbReference type="SIGNOR" id="Q13332"/>
<dbReference type="BioGRID-ORCS" id="5802">
    <property type="hits" value="5 hits in 1179 CRISPR screens"/>
</dbReference>
<dbReference type="CD-CODE" id="FB4E32DD">
    <property type="entry name" value="Presynaptic clusters and postsynaptic densities"/>
</dbReference>
<dbReference type="ChiTaRS" id="PTPRS">
    <property type="organism name" value="human"/>
</dbReference>
<dbReference type="EvolutionaryTrace" id="Q13332"/>
<dbReference type="GeneWiki" id="PTPRS"/>
<dbReference type="GenomeRNAi" id="5802"/>
<dbReference type="Pharos" id="Q13332">
    <property type="development level" value="Tchem"/>
</dbReference>
<dbReference type="PRO" id="PR:Q13332"/>
<dbReference type="Proteomes" id="UP000005640">
    <property type="component" value="Chromosome 19"/>
</dbReference>
<dbReference type="RNAct" id="Q13332">
    <property type="molecule type" value="protein"/>
</dbReference>
<dbReference type="Bgee" id="ENSG00000105426">
    <property type="expression patterns" value="Expressed in cortical plate and 99 other cell types or tissues"/>
</dbReference>
<dbReference type="ExpressionAtlas" id="Q13332">
    <property type="expression patterns" value="baseline and differential"/>
</dbReference>
<dbReference type="GO" id="GO:0030424">
    <property type="term" value="C:axon"/>
    <property type="evidence" value="ECO:0000250"/>
    <property type="project" value="UniProtKB"/>
</dbReference>
<dbReference type="GO" id="GO:0005829">
    <property type="term" value="C:cytosol"/>
    <property type="evidence" value="ECO:0000314"/>
    <property type="project" value="HPA"/>
</dbReference>
<dbReference type="GO" id="GO:0070062">
    <property type="term" value="C:extracellular exosome"/>
    <property type="evidence" value="ECO:0007005"/>
    <property type="project" value="UniProtKB"/>
</dbReference>
<dbReference type="GO" id="GO:0098978">
    <property type="term" value="C:glutamatergic synapse"/>
    <property type="evidence" value="ECO:0007669"/>
    <property type="project" value="Ensembl"/>
</dbReference>
<dbReference type="GO" id="GO:0030426">
    <property type="term" value="C:growth cone"/>
    <property type="evidence" value="ECO:0007669"/>
    <property type="project" value="UniProtKB-SubCell"/>
</dbReference>
<dbReference type="GO" id="GO:0043204">
    <property type="term" value="C:perikaryon"/>
    <property type="evidence" value="ECO:0007669"/>
    <property type="project" value="UniProtKB-SubCell"/>
</dbReference>
<dbReference type="GO" id="GO:0005886">
    <property type="term" value="C:plasma membrane"/>
    <property type="evidence" value="ECO:0000314"/>
    <property type="project" value="HPA"/>
</dbReference>
<dbReference type="GO" id="GO:0098839">
    <property type="term" value="C:postsynaptic density membrane"/>
    <property type="evidence" value="ECO:0000250"/>
    <property type="project" value="UniProtKB"/>
</dbReference>
<dbReference type="GO" id="GO:0042734">
    <property type="term" value="C:presynaptic membrane"/>
    <property type="evidence" value="ECO:0007669"/>
    <property type="project" value="Ensembl"/>
</dbReference>
<dbReference type="GO" id="GO:0098685">
    <property type="term" value="C:Schaffer collateral - CA1 synapse"/>
    <property type="evidence" value="ECO:0007669"/>
    <property type="project" value="Ensembl"/>
</dbReference>
<dbReference type="GO" id="GO:0030672">
    <property type="term" value="C:synaptic vesicle membrane"/>
    <property type="evidence" value="ECO:0000250"/>
    <property type="project" value="UniProtKB"/>
</dbReference>
<dbReference type="GO" id="GO:0035374">
    <property type="term" value="F:chondroitin sulfate binding"/>
    <property type="evidence" value="ECO:0000250"/>
    <property type="project" value="UniProtKB"/>
</dbReference>
<dbReference type="GO" id="GO:0043395">
    <property type="term" value="F:heparan sulfate proteoglycan binding"/>
    <property type="evidence" value="ECO:0000250"/>
    <property type="project" value="UniProtKB"/>
</dbReference>
<dbReference type="GO" id="GO:0008201">
    <property type="term" value="F:heparin binding"/>
    <property type="evidence" value="ECO:0000250"/>
    <property type="project" value="UniProtKB"/>
</dbReference>
<dbReference type="GO" id="GO:0004721">
    <property type="term" value="F:phosphoprotein phosphatase activity"/>
    <property type="evidence" value="ECO:0000314"/>
    <property type="project" value="UniProtKB"/>
</dbReference>
<dbReference type="GO" id="GO:0004725">
    <property type="term" value="F:protein tyrosine phosphatase activity"/>
    <property type="evidence" value="ECO:0000250"/>
    <property type="project" value="UniProtKB"/>
</dbReference>
<dbReference type="GO" id="GO:0021549">
    <property type="term" value="P:cerebellum development"/>
    <property type="evidence" value="ECO:0007669"/>
    <property type="project" value="Ensembl"/>
</dbReference>
<dbReference type="GO" id="GO:0021987">
    <property type="term" value="P:cerebral cortex development"/>
    <property type="evidence" value="ECO:0007669"/>
    <property type="project" value="Ensembl"/>
</dbReference>
<dbReference type="GO" id="GO:0022038">
    <property type="term" value="P:corpus callosum development"/>
    <property type="evidence" value="ECO:0007669"/>
    <property type="project" value="Ensembl"/>
</dbReference>
<dbReference type="GO" id="GO:0090557">
    <property type="term" value="P:establishment of endothelial intestinal barrier"/>
    <property type="evidence" value="ECO:0007669"/>
    <property type="project" value="Ensembl"/>
</dbReference>
<dbReference type="GO" id="GO:0021766">
    <property type="term" value="P:hippocampus development"/>
    <property type="evidence" value="ECO:0007669"/>
    <property type="project" value="Ensembl"/>
</dbReference>
<dbReference type="GO" id="GO:0050804">
    <property type="term" value="P:modulation of chemical synaptic transmission"/>
    <property type="evidence" value="ECO:0007669"/>
    <property type="project" value="Ensembl"/>
</dbReference>
<dbReference type="GO" id="GO:0030517">
    <property type="term" value="P:negative regulation of axon extension"/>
    <property type="evidence" value="ECO:0000250"/>
    <property type="project" value="UniProtKB"/>
</dbReference>
<dbReference type="GO" id="GO:0048681">
    <property type="term" value="P:negative regulation of axon regeneration"/>
    <property type="evidence" value="ECO:0000250"/>
    <property type="project" value="UniProtKB"/>
</dbReference>
<dbReference type="GO" id="GO:0048671">
    <property type="term" value="P:negative regulation of collateral sprouting"/>
    <property type="evidence" value="ECO:0000250"/>
    <property type="project" value="UniProtKB"/>
</dbReference>
<dbReference type="GO" id="GO:0061000">
    <property type="term" value="P:negative regulation of dendritic spine development"/>
    <property type="evidence" value="ECO:0000250"/>
    <property type="project" value="UniProtKB"/>
</dbReference>
<dbReference type="GO" id="GO:0032687">
    <property type="term" value="P:negative regulation of interferon-alpha production"/>
    <property type="evidence" value="ECO:0000315"/>
    <property type="project" value="UniProtKB"/>
</dbReference>
<dbReference type="GO" id="GO:0032688">
    <property type="term" value="P:negative regulation of interferon-beta production"/>
    <property type="evidence" value="ECO:0000315"/>
    <property type="project" value="UniProtKB"/>
</dbReference>
<dbReference type="GO" id="GO:0010977">
    <property type="term" value="P:negative regulation of neuron projection development"/>
    <property type="evidence" value="ECO:0000250"/>
    <property type="project" value="UniProtKB"/>
</dbReference>
<dbReference type="GO" id="GO:0034164">
    <property type="term" value="P:negative regulation of toll-like receptor 9 signaling pathway"/>
    <property type="evidence" value="ECO:0000315"/>
    <property type="project" value="UniProtKB"/>
</dbReference>
<dbReference type="GO" id="GO:0035335">
    <property type="term" value="P:peptidyl-tyrosine dephosphorylation"/>
    <property type="evidence" value="ECO:0000250"/>
    <property type="project" value="UniProtKB"/>
</dbReference>
<dbReference type="GO" id="GO:0006470">
    <property type="term" value="P:protein dephosphorylation"/>
    <property type="evidence" value="ECO:0000314"/>
    <property type="project" value="UniProtKB"/>
</dbReference>
<dbReference type="GO" id="GO:0099151">
    <property type="term" value="P:regulation of postsynaptic density assembly"/>
    <property type="evidence" value="ECO:0007669"/>
    <property type="project" value="Ensembl"/>
</dbReference>
<dbReference type="GO" id="GO:0007165">
    <property type="term" value="P:signal transduction"/>
    <property type="evidence" value="ECO:0000318"/>
    <property type="project" value="GO_Central"/>
</dbReference>
<dbReference type="GO" id="GO:0021510">
    <property type="term" value="P:spinal cord development"/>
    <property type="evidence" value="ECO:0007669"/>
    <property type="project" value="Ensembl"/>
</dbReference>
<dbReference type="GO" id="GO:0099560">
    <property type="term" value="P:synaptic membrane adhesion"/>
    <property type="evidence" value="ECO:0000314"/>
    <property type="project" value="SynGO"/>
</dbReference>
<dbReference type="GO" id="GO:0099537">
    <property type="term" value="P:trans-synaptic signaling"/>
    <property type="evidence" value="ECO:0007669"/>
    <property type="project" value="Ensembl"/>
</dbReference>
<dbReference type="CDD" id="cd00063">
    <property type="entry name" value="FN3"/>
    <property type="match status" value="8"/>
</dbReference>
<dbReference type="CDD" id="cd05738">
    <property type="entry name" value="IgI_2_RPTP_IIa_LAR_like"/>
    <property type="match status" value="1"/>
</dbReference>
<dbReference type="CDD" id="cd05739">
    <property type="entry name" value="IgI_3_RPTP_IIa_LAR_like"/>
    <property type="match status" value="1"/>
</dbReference>
<dbReference type="CDD" id="cd14627">
    <property type="entry name" value="R-PTP-S-2"/>
    <property type="match status" value="1"/>
</dbReference>
<dbReference type="CDD" id="cd14625">
    <property type="entry name" value="R-PTPc-S-1"/>
    <property type="match status" value="1"/>
</dbReference>
<dbReference type="FunFam" id="2.60.40.10:FF:000549">
    <property type="entry name" value="Protein tyrosine phosphatase, receptor type S"/>
    <property type="match status" value="1"/>
</dbReference>
<dbReference type="FunFam" id="2.60.40.10:FF:000010">
    <property type="entry name" value="receptor-type tyrosine-protein phosphatase delta isoform X1"/>
    <property type="match status" value="1"/>
</dbReference>
<dbReference type="FunFam" id="2.60.40.10:FF:000027">
    <property type="entry name" value="receptor-type tyrosine-protein phosphatase delta isoform X1"/>
    <property type="match status" value="1"/>
</dbReference>
<dbReference type="FunFam" id="2.60.40.10:FF:000036">
    <property type="entry name" value="receptor-type tyrosine-protein phosphatase delta isoform X1"/>
    <property type="match status" value="1"/>
</dbReference>
<dbReference type="FunFam" id="2.60.40.10:FF:000066">
    <property type="entry name" value="receptor-type tyrosine-protein phosphatase delta isoform X1"/>
    <property type="match status" value="1"/>
</dbReference>
<dbReference type="FunFam" id="2.60.40.10:FF:000068">
    <property type="entry name" value="receptor-type tyrosine-protein phosphatase delta isoform X1"/>
    <property type="match status" value="1"/>
</dbReference>
<dbReference type="FunFam" id="2.60.40.10:FF:000144">
    <property type="entry name" value="receptor-type tyrosine-protein phosphatase delta isoform X1"/>
    <property type="match status" value="1"/>
</dbReference>
<dbReference type="FunFam" id="2.60.40.10:FF:000015">
    <property type="entry name" value="receptor-type tyrosine-protein phosphatase delta isoform X2"/>
    <property type="match status" value="1"/>
</dbReference>
<dbReference type="FunFam" id="2.60.40.10:FF:000023">
    <property type="entry name" value="receptor-type tyrosine-protein phosphatase delta isoform X2"/>
    <property type="match status" value="1"/>
</dbReference>
<dbReference type="FunFam" id="2.60.40.10:FF:000082">
    <property type="entry name" value="receptor-type tyrosine-protein phosphatase delta isoform X2"/>
    <property type="match status" value="1"/>
</dbReference>
<dbReference type="FunFam" id="3.90.190.10:FF:000002">
    <property type="entry name" value="receptor-type tyrosine-protein phosphatase delta isoform X2"/>
    <property type="match status" value="1"/>
</dbReference>
<dbReference type="FunFam" id="3.90.190.10:FF:000001">
    <property type="entry name" value="Receptor-type tyrosine-protein phosphatase F isoform A"/>
    <property type="match status" value="1"/>
</dbReference>
<dbReference type="FunFam" id="2.60.40.10:FF:000098">
    <property type="entry name" value="receptor-type tyrosine-protein phosphatase F isoform X1"/>
    <property type="match status" value="1"/>
</dbReference>
<dbReference type="Gene3D" id="2.60.40.10">
    <property type="entry name" value="Immunoglobulins"/>
    <property type="match status" value="11"/>
</dbReference>
<dbReference type="Gene3D" id="3.90.190.10">
    <property type="entry name" value="Protein tyrosine phosphatase superfamily"/>
    <property type="match status" value="2"/>
</dbReference>
<dbReference type="InterPro" id="IPR003961">
    <property type="entry name" value="FN3_dom"/>
</dbReference>
<dbReference type="InterPro" id="IPR036116">
    <property type="entry name" value="FN3_sf"/>
</dbReference>
<dbReference type="InterPro" id="IPR007110">
    <property type="entry name" value="Ig-like_dom"/>
</dbReference>
<dbReference type="InterPro" id="IPR036179">
    <property type="entry name" value="Ig-like_dom_sf"/>
</dbReference>
<dbReference type="InterPro" id="IPR013783">
    <property type="entry name" value="Ig-like_fold"/>
</dbReference>
<dbReference type="InterPro" id="IPR013098">
    <property type="entry name" value="Ig_I-set"/>
</dbReference>
<dbReference type="InterPro" id="IPR003599">
    <property type="entry name" value="Ig_sub"/>
</dbReference>
<dbReference type="InterPro" id="IPR003598">
    <property type="entry name" value="Ig_sub2"/>
</dbReference>
<dbReference type="InterPro" id="IPR029021">
    <property type="entry name" value="Prot-tyrosine_phosphatase-like"/>
</dbReference>
<dbReference type="InterPro" id="IPR000242">
    <property type="entry name" value="PTP_cat"/>
</dbReference>
<dbReference type="InterPro" id="IPR050713">
    <property type="entry name" value="RTP_Phos/Ushers"/>
</dbReference>
<dbReference type="InterPro" id="IPR016130">
    <property type="entry name" value="Tyr_Pase_AS"/>
</dbReference>
<dbReference type="InterPro" id="IPR003595">
    <property type="entry name" value="Tyr_Pase_cat"/>
</dbReference>
<dbReference type="InterPro" id="IPR000387">
    <property type="entry name" value="Tyr_Pase_dom"/>
</dbReference>
<dbReference type="PANTHER" id="PTHR46957">
    <property type="entry name" value="CYTOKINE RECEPTOR"/>
    <property type="match status" value="1"/>
</dbReference>
<dbReference type="PANTHER" id="PTHR46957:SF6">
    <property type="entry name" value="PROTEIN-TYROSINE-PHOSPHATASE"/>
    <property type="match status" value="1"/>
</dbReference>
<dbReference type="Pfam" id="PF00041">
    <property type="entry name" value="fn3"/>
    <property type="match status" value="8"/>
</dbReference>
<dbReference type="Pfam" id="PF07679">
    <property type="entry name" value="I-set"/>
    <property type="match status" value="1"/>
</dbReference>
<dbReference type="Pfam" id="PF13927">
    <property type="entry name" value="Ig_3"/>
    <property type="match status" value="2"/>
</dbReference>
<dbReference type="Pfam" id="PF00102">
    <property type="entry name" value="Y_phosphatase"/>
    <property type="match status" value="2"/>
</dbReference>
<dbReference type="PRINTS" id="PR00014">
    <property type="entry name" value="FNTYPEIII"/>
</dbReference>
<dbReference type="PRINTS" id="PR00700">
    <property type="entry name" value="PRTYPHPHTASE"/>
</dbReference>
<dbReference type="SMART" id="SM00060">
    <property type="entry name" value="FN3"/>
    <property type="match status" value="8"/>
</dbReference>
<dbReference type="SMART" id="SM00409">
    <property type="entry name" value="IG"/>
    <property type="match status" value="3"/>
</dbReference>
<dbReference type="SMART" id="SM00408">
    <property type="entry name" value="IGc2"/>
    <property type="match status" value="3"/>
</dbReference>
<dbReference type="SMART" id="SM00194">
    <property type="entry name" value="PTPc"/>
    <property type="match status" value="2"/>
</dbReference>
<dbReference type="SMART" id="SM00404">
    <property type="entry name" value="PTPc_motif"/>
    <property type="match status" value="2"/>
</dbReference>
<dbReference type="SUPFAM" id="SSF52799">
    <property type="entry name" value="(Phosphotyrosine protein) phosphatases II"/>
    <property type="match status" value="2"/>
</dbReference>
<dbReference type="SUPFAM" id="SSF49265">
    <property type="entry name" value="Fibronectin type III"/>
    <property type="match status" value="5"/>
</dbReference>
<dbReference type="SUPFAM" id="SSF48726">
    <property type="entry name" value="Immunoglobulin"/>
    <property type="match status" value="3"/>
</dbReference>
<dbReference type="PROSITE" id="PS50853">
    <property type="entry name" value="FN3"/>
    <property type="match status" value="8"/>
</dbReference>
<dbReference type="PROSITE" id="PS50835">
    <property type="entry name" value="IG_LIKE"/>
    <property type="match status" value="3"/>
</dbReference>
<dbReference type="PROSITE" id="PS00383">
    <property type="entry name" value="TYR_PHOSPHATASE_1"/>
    <property type="match status" value="2"/>
</dbReference>
<dbReference type="PROSITE" id="PS50056">
    <property type="entry name" value="TYR_PHOSPHATASE_2"/>
    <property type="match status" value="2"/>
</dbReference>
<dbReference type="PROSITE" id="PS50055">
    <property type="entry name" value="TYR_PHOSPHATASE_PTP"/>
    <property type="match status" value="2"/>
</dbReference>
<protein>
    <recommendedName>
        <fullName>Receptor-type tyrosine-protein phosphatase S</fullName>
        <shortName>R-PTP-S</shortName>
        <ecNumber evidence="19 27">3.1.3.48</ecNumber>
    </recommendedName>
    <alternativeName>
        <fullName>Receptor-type tyrosine-protein phosphatase sigma</fullName>
        <shortName>R-PTP-sigma</shortName>
    </alternativeName>
</protein>
<accession>Q13332</accession>
<accession>O75255</accession>
<accession>O75870</accession>
<accession>Q15718</accession>
<accession>Q16341</accession>
<accession>Q2M3R7</accession>
<evidence type="ECO:0000250" key="1"/>
<evidence type="ECO:0000250" key="2">
    <source>
        <dbReference type="UniProtKB" id="B0V2N1"/>
    </source>
</evidence>
<evidence type="ECO:0000250" key="3">
    <source>
        <dbReference type="UniProtKB" id="F1NWE3"/>
    </source>
</evidence>
<evidence type="ECO:0000250" key="4">
    <source>
        <dbReference type="UniProtKB" id="Q64605"/>
    </source>
</evidence>
<evidence type="ECO:0000255" key="5"/>
<evidence type="ECO:0000255" key="6">
    <source>
        <dbReference type="PROSITE-ProRule" id="PRU00114"/>
    </source>
</evidence>
<evidence type="ECO:0000255" key="7">
    <source>
        <dbReference type="PROSITE-ProRule" id="PRU00160"/>
    </source>
</evidence>
<evidence type="ECO:0000255" key="8">
    <source>
        <dbReference type="PROSITE-ProRule" id="PRU00316"/>
    </source>
</evidence>
<evidence type="ECO:0000255" key="9">
    <source>
        <dbReference type="PROSITE-ProRule" id="PRU10044"/>
    </source>
</evidence>
<evidence type="ECO:0000256" key="10">
    <source>
        <dbReference type="SAM" id="MobiDB-lite"/>
    </source>
</evidence>
<evidence type="ECO:0000269" key="11">
    <source>
    </source>
</evidence>
<evidence type="ECO:0000269" key="12">
    <source>
    </source>
</evidence>
<evidence type="ECO:0000269" key="13">
    <source>
    </source>
</evidence>
<evidence type="ECO:0000269" key="14">
    <source>
    </source>
</evidence>
<evidence type="ECO:0000269" key="15">
    <source>
    </source>
</evidence>
<evidence type="ECO:0000269" key="16">
    <source>
    </source>
</evidence>
<evidence type="ECO:0000269" key="17">
    <source>
    </source>
</evidence>
<evidence type="ECO:0000269" key="18">
    <source>
    </source>
</evidence>
<evidence type="ECO:0000269" key="19">
    <source>
    </source>
</evidence>
<evidence type="ECO:0000269" key="20">
    <source>
    </source>
</evidence>
<evidence type="ECO:0000269" key="21">
    <source>
    </source>
</evidence>
<evidence type="ECO:0000269" key="22">
    <source ref="4"/>
</evidence>
<evidence type="ECO:0000303" key="23">
    <source>
    </source>
</evidence>
<evidence type="ECO:0000303" key="24">
    <source>
    </source>
</evidence>
<evidence type="ECO:0000305" key="25"/>
<evidence type="ECO:0000305" key="26">
    <source>
    </source>
</evidence>
<evidence type="ECO:0000305" key="27">
    <source>
    </source>
</evidence>
<evidence type="ECO:0007744" key="28">
    <source>
        <dbReference type="PDB" id="2YD2"/>
    </source>
</evidence>
<evidence type="ECO:0007744" key="29">
    <source>
        <dbReference type="PDB" id="2YD3"/>
    </source>
</evidence>
<evidence type="ECO:0007744" key="30">
    <source>
        <dbReference type="PDB" id="2YD9"/>
    </source>
</evidence>
<evidence type="ECO:0007744" key="31">
    <source>
        <dbReference type="PDB" id="4BPC"/>
    </source>
</evidence>
<evidence type="ECO:0007744" key="32">
    <source>
        <dbReference type="PDB" id="4PBX"/>
    </source>
</evidence>
<evidence type="ECO:0007829" key="33">
    <source>
        <dbReference type="PDB" id="2FH7"/>
    </source>
</evidence>
<evidence type="ECO:0007829" key="34">
    <source>
        <dbReference type="PDB" id="2YD3"/>
    </source>
</evidence>
<evidence type="ECO:0007829" key="35">
    <source>
        <dbReference type="PDB" id="2YD9"/>
    </source>
</evidence>
<evidence type="ECO:0007829" key="36">
    <source>
        <dbReference type="PDB" id="4BPC"/>
    </source>
</evidence>
<evidence type="ECO:0007829" key="37">
    <source>
        <dbReference type="PDB" id="4PBX"/>
    </source>
</evidence>
<sequence length="1948" mass="217041">MAPTWGPGMVSVVGPMGLLVVLLVGGCAAEEPPRFIKEPKDQIGVSGGVASFVCQATGDPKPRVTWNKKGKKVNSQRFETIEFDESAGAVLRIQPLRTPRDENVYECVAQNSVGEITVHAKLTVLREDQLPSGFPNIDMGPQLKVVERTRTATMLCAASGNPDPEITWFKDFLPVDPSASNGRIKQLRSETFESTPIRGALQIESSEETDQGKYECVATNSAGVRYSSPANLYVRELREVRRVAPRFSILPMSHEIMPGGNVNITCVAVGSPMPYVKWMQGAEDLTPEDDMPVGRNVLELTDVKDSANYTCVAMSSLGVIEAVAQITVKSLPKAPGTPMVTENTATSITITWDSGNPDPVSYYVIEYKSKSQDGPYQIKEDITTTRYSIGGLSPNSEYEIWVSAVNSIGQGPPSESVVTRTGEQAPASAPRNVQARMLSATTMIVQWEEPVEPNGLIRGYRVYYTMEPEHPVGNWQKHNVDDSLLTTVGSLLEDETYTVRVLAFTSVGDGPLSDPIQVKTQQGVPGQPMNLRAEARSETSITLSWSPPRQESIIKYELLFREGDHGREVGRTFDPTTSYVVEDLKPNTEYAFRLAARSPQGLGAFTPVVRQRTLQSKPSAPPQDVKCVSVRSTAILVSWRPPPPETHNGALVGYSVRYRPLGSEDPEPKEVNGIPPTTTQILLEALEKWTQYRITTVAHTEVGPGPESSPVVVRTDEDVPSAPPRKVEAEALNATAIRVLWRSPAPGRQHGQIRGYQVHYVRMEGAEARGPPRIKDVMLADAQWETDDTAEYEMVITNLQPETAYSITVAAYTMKGDGARSKPKVVVTKGAVLGRPTLSVQQTPEGSLLARWEPPAGTAEDQVLGYRLQFGREDSTPLATLEFPPSEDRYTASGVHKGATYVFRLAARSRGGLGEEAAEVLSIPEDTPRGHPQILEAAGNASAGTVLLRWLPPVPAERNGAIVKYTVAVREAGALGPARETELPAAAEPGAENALTLQGLKPDTAYDLQVRAHTRRGPGPFSPPVRYRTFLRDQVSPKNFKVKMIMKTSVLLSWEFPDNYNSPTPYKIQYNGLTLDVDGRTTKKLITHLKPHTFYNFVLTNRGSSLGGLQQTVTAWTAFNLLNGKPSVAPKPDADGFIMVYLPDGQSPVPVQSYFIVMVPLRKSRGGQFLTPLGSPEDMDLEELIQDISRLQRRSLRHSRQLEVPRPYIAARFSVLPPTFHPGDQKQYGGFDNRGLEPGHRYVLFVLAVLQKSEPTFAASPFSDPFQLDNPDPQPIVDGEEGLIWVIGPVLAVVFIICIVIAILLYKNKPDSKRKDSEPRTKCLLNNADLAPHHPKDPVEMRRINFQTPDSGLRSPLREPGFHFESMLSHPPIPIADMAEHTERLKANDSLKLSQEYESIDPGQQFTWEHSNLEVNKPKNRYANVIAYDHSRVILQPIEGIMGSDYINANYVDGYRCQNAYIATQGPLPETFGDFWRMVWEQRSATIVMMTRLEEKSRIKCDQYWPNRGTETYGFIQVTLLDTIELATFCVRTFSLHKNGSSEKREVRQFQFTAWPDHGVPEYPTPFLAFLRRVKTCNPPDAGPIVVHCSAGVGRTGCFIVIDAMLERIKPEKTVDVYGHVTLMRSQRNYMVQTEDQYSFIHEALLEAVGCGNTEVPARSLYAYIQKLAQVEPGEHVTGMELEFKRLANSKAHTSRFISANLPCNKFKNRLVNIMPYESTRVCLQPIRGVEGSDYINASFIDGYRQQKAYIATQGPLAETTEDFWRMLWENNSTIVVMLTKLREMGREKCHQYWPAERSARYQYFVVDPMAEYNMPQYILREFKVTDARDGQSRTVRQFQFTDWPEQGVPKSGEGFIDFIGQVHKTKEQFGQDGPISVHCSAGVGRTGVFITLSIVLERMRYEGVVDIFQTVKMLRTQRPAMVQTEDEYQFCYQAALEYLGSFDHYAT</sequence>